<protein>
    <recommendedName>
        <fullName evidence="1">Protein X</fullName>
    </recommendedName>
    <alternativeName>
        <fullName evidence="1">HBx</fullName>
    </alternativeName>
    <alternativeName>
        <fullName evidence="1">Peptide X</fullName>
    </alternativeName>
    <alternativeName>
        <fullName evidence="1">pX</fullName>
    </alternativeName>
</protein>
<organismHost>
    <name type="scientific">Homo sapiens</name>
    <name type="common">Human</name>
    <dbReference type="NCBI Taxonomy" id="9606"/>
</organismHost>
<organismHost>
    <name type="scientific">Pan troglodytes</name>
    <name type="common">Chimpanzee</name>
    <dbReference type="NCBI Taxonomy" id="9598"/>
</organismHost>
<reference key="1">
    <citation type="journal article" date="2002" name="J. Virol.">
        <title>Hepatitis B virus of genotype B with or without recombination with genotype C over the precore region plus the core gene.</title>
        <authorList>
            <person name="Sugauchi F."/>
            <person name="Orito E."/>
            <person name="Ichida T."/>
            <person name="Kato H."/>
            <person name="Sakugawa H."/>
            <person name="Kakumu S."/>
            <person name="Ishida T."/>
            <person name="Chutaputti A."/>
            <person name="Lai C.L."/>
            <person name="Ueda R."/>
            <person name="Miyakawa Y."/>
            <person name="Mizokami M."/>
        </authorList>
    </citation>
    <scope>NUCLEOTIDE SEQUENCE [GENOMIC DNA]</scope>
</reference>
<reference key="2">
    <citation type="journal article" date="2004" name="J. Virol.">
        <title>The enigmatic X gene of hepatitis B virus.</title>
        <authorList>
            <person name="Bouchard M.J."/>
            <person name="Schneider R.J."/>
        </authorList>
    </citation>
    <scope>REVIEW</scope>
</reference>
<reference key="3">
    <citation type="journal article" date="2006" name="Cancer Sci.">
        <title>Molecular functions and biological roles of hepatitis B virus x protein.</title>
        <authorList>
            <person name="Tang H."/>
            <person name="Oishi N."/>
            <person name="Kaneko S."/>
            <person name="Murakami S."/>
        </authorList>
    </citation>
    <scope>REVIEW</scope>
</reference>
<sequence length="154" mass="16638">MAARLCCQLDTARDVLCLRPVGAESRGRPLPGPLGALPPASPSAVPTDHGAHLSLRGLPVCAFSSTGPCALRFTSARRMETTVNAHRNLPKVLHKRTLGLSAMSTTDLEAYFKDCVFTEWEELGEEMRLKVFVLGGCRHKLVCSPAPCNFFTSA</sequence>
<name>X_HBVB8</name>
<gene>
    <name evidence="1" type="primary">X</name>
</gene>
<evidence type="ECO:0000255" key="1">
    <source>
        <dbReference type="HAMAP-Rule" id="MF_04074"/>
    </source>
</evidence>
<comment type="function">
    <text evidence="1">Multifunctional protein that plays a role in silencing host antiviral defenses and promoting viral transcription. Does not seem to be essential for HBV infection. May be directly involved in development of cirrhosis and liver cancer (hepatocellular carcinoma). Most of cytosolic activities involve modulation of cytosolic calcium. The effect on apoptosis is controversial depending on the cell types in which the studies have been conducted. May induce apoptosis by localizing in mitochondria and causing loss of mitochondrial membrane potential. May also modulate apoptosis by binding host CFLAR, a key regulator of the death-inducing signaling complex (DISC). Promotes viral transcription by using the host E3 ubiquitin ligase DDB1 to target the SMC5-SMC6 complex to proteasomal degradation. This host complex would otherwise bind to viral episomal DNA, and prevents its transcription. Moderately stimulates transcription of many different viral and cellular transcription elements. Promoters and enhancers stimulated by HBx contain DNA binding sites for NF-kappa-B, AP-1, AP-2, c-EBP, ATF/CREB, or the calcium-activated factor NF-AT.</text>
</comment>
<comment type="subunit">
    <text evidence="1">May form homodimer. May interact with host CEBPA, CFLAR, CREB1, DDB1, E4F1, HBXIP, HSPD1/HSP60, NFKBIA, POLR2E and SMAD4. Interacts with host SMC5-SMC6 complex and induces its degradation. Interacts with host TRPC4AP; leading to prevent ubiquitination of TRPC4AP. Interacts with host PLSCR1; this interaction promotes ubiquitination and degradation of HBx and impairs HBx-mediated cell proliferation.</text>
</comment>
<comment type="subcellular location">
    <subcellularLocation>
        <location evidence="1">Host cytoplasm</location>
    </subcellularLocation>
    <subcellularLocation>
        <location evidence="1">Host nucleus</location>
    </subcellularLocation>
    <subcellularLocation>
        <location evidence="1">Host mitochondrion</location>
    </subcellularLocation>
    <text evidence="1">Mainly cytoplasmic as only a fraction is detected in the nucleus. In cytoplasm, a minor fraction associates with mitochondria or proteasomes.</text>
</comment>
<comment type="PTM">
    <text evidence="1">A fraction may be phosphorylated in insect cells and HepG2 cells, a human hepatoblastoma cell line. Phosphorylated in vitro by host protein kinase C or mitogen-activated protein kinase. N-acetylated in insect cells.</text>
</comment>
<comment type="similarity">
    <text evidence="1">Belongs to the orthohepadnavirus protein X family.</text>
</comment>
<comment type="caution">
    <text>Transcriptional activities should be taken with a grain of salt. As of 2007, all studies demonstrating in vivo interaction between protein X and transcriptional components were performed with significant overexpression of both proteins and in the absence of viral infection.</text>
</comment>
<accession>P0C678</accession>
<proteinExistence type="inferred from homology"/>
<keyword id="KW-1074">Activation of host NF-kappa-B by virus</keyword>
<keyword id="KW-0010">Activator</keyword>
<keyword id="KW-0053">Apoptosis</keyword>
<keyword id="KW-1035">Host cytoplasm</keyword>
<keyword id="KW-1079">Host G2/M cell cycle arrest by virus</keyword>
<keyword id="KW-1045">Host mitochondrion</keyword>
<keyword id="KW-1048">Host nucleus</keyword>
<keyword id="KW-0945">Host-virus interaction</keyword>
<keyword id="KW-1121">Modulation of host cell cycle by virus</keyword>
<keyword id="KW-0804">Transcription</keyword>
<keyword id="KW-0805">Transcription regulation</keyword>
<feature type="chain" id="PRO_0000319903" description="Protein X">
    <location>
        <begin position="1"/>
        <end position="154"/>
    </location>
</feature>
<feature type="region of interest" description="Mitochondrial targeting sequence" evidence="1">
    <location>
        <begin position="68"/>
        <end position="117"/>
    </location>
</feature>
<dbReference type="EMBL" id="AB073854">
    <property type="status" value="NOT_ANNOTATED_CDS"/>
    <property type="molecule type" value="Genomic_DNA"/>
</dbReference>
<dbReference type="SMR" id="P0C678"/>
<dbReference type="Proteomes" id="UP000007919">
    <property type="component" value="Genome"/>
</dbReference>
<dbReference type="GO" id="GO:0033650">
    <property type="term" value="C:host cell mitochondrion"/>
    <property type="evidence" value="ECO:0007669"/>
    <property type="project" value="UniProtKB-SubCell"/>
</dbReference>
<dbReference type="GO" id="GO:0042025">
    <property type="term" value="C:host cell nucleus"/>
    <property type="evidence" value="ECO:0007669"/>
    <property type="project" value="UniProtKB-SubCell"/>
</dbReference>
<dbReference type="GO" id="GO:0006351">
    <property type="term" value="P:DNA-templated transcription"/>
    <property type="evidence" value="ECO:0007669"/>
    <property type="project" value="UniProtKB-UniRule"/>
</dbReference>
<dbReference type="GO" id="GO:0085033">
    <property type="term" value="P:symbiont-mediated activation of host NF-kappaB cascade"/>
    <property type="evidence" value="ECO:0007669"/>
    <property type="project" value="UniProtKB-UniRule"/>
</dbReference>
<dbReference type="GO" id="GO:0039592">
    <property type="term" value="P:symbiont-mediated arrest of host cell cycle during G2/M transition"/>
    <property type="evidence" value="ECO:0007669"/>
    <property type="project" value="UniProtKB-UniRule"/>
</dbReference>
<dbReference type="GO" id="GO:0019079">
    <property type="term" value="P:viral genome replication"/>
    <property type="evidence" value="ECO:0007669"/>
    <property type="project" value="UniProtKB-UniRule"/>
</dbReference>
<dbReference type="HAMAP" id="MF_04074">
    <property type="entry name" value="HBV_X"/>
    <property type="match status" value="1"/>
</dbReference>
<dbReference type="InterPro" id="IPR000236">
    <property type="entry name" value="Transactivation_prot_X"/>
</dbReference>
<dbReference type="Pfam" id="PF00739">
    <property type="entry name" value="X"/>
    <property type="match status" value="1"/>
</dbReference>
<organism>
    <name type="scientific">Hepatitis B virus genotype B1 (isolate Japan/Ry30/2002)</name>
    <name type="common">HBV-B</name>
    <dbReference type="NCBI Taxonomy" id="489465"/>
    <lineage>
        <taxon>Viruses</taxon>
        <taxon>Riboviria</taxon>
        <taxon>Pararnavirae</taxon>
        <taxon>Artverviricota</taxon>
        <taxon>Revtraviricetes</taxon>
        <taxon>Blubervirales</taxon>
        <taxon>Hepadnaviridae</taxon>
        <taxon>Orthohepadnavirus</taxon>
        <taxon>Hepatitis B virus</taxon>
    </lineage>
</organism>